<dbReference type="EMBL" id="AB019226">
    <property type="protein sequence ID" value="BAB10533.1"/>
    <property type="status" value="ALT_SEQ"/>
    <property type="molecule type" value="Genomic_DNA"/>
</dbReference>
<dbReference type="EMBL" id="CP002688">
    <property type="protein sequence ID" value="AED96205.1"/>
    <property type="molecule type" value="Genomic_DNA"/>
</dbReference>
<dbReference type="EMBL" id="BT030653">
    <property type="protein sequence ID" value="ABR46233.1"/>
    <property type="molecule type" value="mRNA"/>
</dbReference>
<dbReference type="EMBL" id="AY084837">
    <property type="protein sequence ID" value="AAM61402.1"/>
    <property type="molecule type" value="mRNA"/>
</dbReference>
<dbReference type="RefSeq" id="NP_568769.1">
    <property type="nucleotide sequence ID" value="NM_124615.4"/>
</dbReference>
<dbReference type="SMR" id="Q8LFH6"/>
<dbReference type="FunCoup" id="Q8LFH6">
    <property type="interactions" value="2527"/>
</dbReference>
<dbReference type="STRING" id="3702.Q8LFH6"/>
<dbReference type="PaxDb" id="3702-AT5G52360.1"/>
<dbReference type="ProteomicsDB" id="244680"/>
<dbReference type="EnsemblPlants" id="AT5G52360.1">
    <property type="protein sequence ID" value="AT5G52360.1"/>
    <property type="gene ID" value="AT5G52360"/>
</dbReference>
<dbReference type="GeneID" id="835312"/>
<dbReference type="Gramene" id="AT5G52360.1">
    <property type="protein sequence ID" value="AT5G52360.1"/>
    <property type="gene ID" value="AT5G52360"/>
</dbReference>
<dbReference type="KEGG" id="ath:AT5G52360"/>
<dbReference type="Araport" id="AT5G52360"/>
<dbReference type="TAIR" id="AT5G52360">
    <property type="gene designation" value="ADF10"/>
</dbReference>
<dbReference type="eggNOG" id="KOG1735">
    <property type="taxonomic scope" value="Eukaryota"/>
</dbReference>
<dbReference type="HOGENOM" id="CLU_094004_2_2_1"/>
<dbReference type="InParanoid" id="Q8LFH6"/>
<dbReference type="OMA" id="VEDECKI"/>
<dbReference type="PhylomeDB" id="Q8LFH6"/>
<dbReference type="PRO" id="PR:Q8LFH6"/>
<dbReference type="Proteomes" id="UP000006548">
    <property type="component" value="Chromosome 5"/>
</dbReference>
<dbReference type="ExpressionAtlas" id="Q8LFH6">
    <property type="expression patterns" value="baseline and differential"/>
</dbReference>
<dbReference type="GO" id="GO:0005884">
    <property type="term" value="C:actin filament"/>
    <property type="evidence" value="ECO:0000314"/>
    <property type="project" value="TAIR"/>
</dbReference>
<dbReference type="GO" id="GO:0048046">
    <property type="term" value="C:apoplast"/>
    <property type="evidence" value="ECO:0000314"/>
    <property type="project" value="TAIR"/>
</dbReference>
<dbReference type="GO" id="GO:0005737">
    <property type="term" value="C:cytoplasm"/>
    <property type="evidence" value="ECO:0007669"/>
    <property type="project" value="UniProtKB-KW"/>
</dbReference>
<dbReference type="GO" id="GO:0003779">
    <property type="term" value="F:actin binding"/>
    <property type="evidence" value="ECO:0000314"/>
    <property type="project" value="TAIR"/>
</dbReference>
<dbReference type="GO" id="GO:0030042">
    <property type="term" value="P:actin filament depolymerization"/>
    <property type="evidence" value="ECO:0000314"/>
    <property type="project" value="TAIR"/>
</dbReference>
<dbReference type="GO" id="GO:0009860">
    <property type="term" value="P:pollen tube growth"/>
    <property type="evidence" value="ECO:0000315"/>
    <property type="project" value="TAIR"/>
</dbReference>
<dbReference type="CDD" id="cd11286">
    <property type="entry name" value="ADF_cofilin_like"/>
    <property type="match status" value="1"/>
</dbReference>
<dbReference type="FunFam" id="3.40.20.10:FF:000025">
    <property type="entry name" value="Actin-depolymerizing factor 2"/>
    <property type="match status" value="1"/>
</dbReference>
<dbReference type="Gene3D" id="3.40.20.10">
    <property type="entry name" value="Severin"/>
    <property type="match status" value="1"/>
</dbReference>
<dbReference type="InterPro" id="IPR002108">
    <property type="entry name" value="ADF-H"/>
</dbReference>
<dbReference type="InterPro" id="IPR029006">
    <property type="entry name" value="ADF-H/Gelsolin-like_dom_sf"/>
</dbReference>
<dbReference type="InterPro" id="IPR017904">
    <property type="entry name" value="ADF/Cofilin"/>
</dbReference>
<dbReference type="PANTHER" id="PTHR11913">
    <property type="entry name" value="COFILIN-RELATED"/>
    <property type="match status" value="1"/>
</dbReference>
<dbReference type="Pfam" id="PF00241">
    <property type="entry name" value="Cofilin_ADF"/>
    <property type="match status" value="1"/>
</dbReference>
<dbReference type="SMART" id="SM00102">
    <property type="entry name" value="ADF"/>
    <property type="match status" value="1"/>
</dbReference>
<dbReference type="SUPFAM" id="SSF55753">
    <property type="entry name" value="Actin depolymerizing proteins"/>
    <property type="match status" value="1"/>
</dbReference>
<dbReference type="PROSITE" id="PS51263">
    <property type="entry name" value="ADF_H"/>
    <property type="match status" value="1"/>
</dbReference>
<keyword id="KW-0009">Actin-binding</keyword>
<keyword id="KW-0963">Cytoplasm</keyword>
<keyword id="KW-0206">Cytoskeleton</keyword>
<keyword id="KW-0597">Phosphoprotein</keyword>
<keyword id="KW-1185">Reference proteome</keyword>
<reference key="1">
    <citation type="journal article" date="2000" name="DNA Res.">
        <title>Structural analysis of Arabidopsis thaliana chromosome 5. X. Sequence features of the regions of 3,076,755 bp covered by sixty P1 and TAC clones.</title>
        <authorList>
            <person name="Sato S."/>
            <person name="Nakamura Y."/>
            <person name="Kaneko T."/>
            <person name="Katoh T."/>
            <person name="Asamizu E."/>
            <person name="Kotani H."/>
            <person name="Tabata S."/>
        </authorList>
    </citation>
    <scope>NUCLEOTIDE SEQUENCE [LARGE SCALE GENOMIC DNA]</scope>
    <source>
        <strain>cv. Columbia</strain>
    </source>
</reference>
<reference key="2">
    <citation type="journal article" date="2017" name="Plant J.">
        <title>Araport11: a complete reannotation of the Arabidopsis thaliana reference genome.</title>
        <authorList>
            <person name="Cheng C.Y."/>
            <person name="Krishnakumar V."/>
            <person name="Chan A.P."/>
            <person name="Thibaud-Nissen F."/>
            <person name="Schobel S."/>
            <person name="Town C.D."/>
        </authorList>
    </citation>
    <scope>GENOME REANNOTATION</scope>
    <source>
        <strain>cv. Columbia</strain>
    </source>
</reference>
<reference key="3">
    <citation type="submission" date="2007-06" db="EMBL/GenBank/DDBJ databases">
        <title>Arabidopsis ORF clones.</title>
        <authorList>
            <person name="Bautista-Mercan V.R."/>
            <person name="Kim C.J."/>
            <person name="Chen H."/>
            <person name="Quan R."/>
            <person name="De Los Reyes C."/>
            <person name="Ecker J.R."/>
        </authorList>
    </citation>
    <scope>NUCLEOTIDE SEQUENCE [LARGE SCALE MRNA]</scope>
    <source>
        <strain>cv. Columbia</strain>
    </source>
</reference>
<reference key="4">
    <citation type="submission" date="2002-03" db="EMBL/GenBank/DDBJ databases">
        <title>Full-length cDNA from Arabidopsis thaliana.</title>
        <authorList>
            <person name="Brover V.V."/>
            <person name="Troukhan M.E."/>
            <person name="Alexandrov N.A."/>
            <person name="Lu Y.-P."/>
            <person name="Flavell R.B."/>
            <person name="Feldmann K.A."/>
        </authorList>
    </citation>
    <scope>NUCLEOTIDE SEQUENCE [LARGE SCALE MRNA]</scope>
</reference>
<reference key="5">
    <citation type="journal article" date="2006" name="J. Plant Physiol.">
        <title>Comparative study of rice and Arabidopsis actin-depolymerizing factors gene families.</title>
        <authorList>
            <person name="Feng Y."/>
            <person name="Liu Q."/>
            <person name="Xue Q."/>
        </authorList>
    </citation>
    <scope>GENE FAMILY</scope>
</reference>
<reference key="6">
    <citation type="journal article" date="2011" name="Plant Cell Physiol.">
        <title>Spatial and temporal expression of actin depolymerizing factors ADF7 and ADF10 during male gametophyte development in Arabidopsis thaliana.</title>
        <authorList>
            <person name="Bou Daher F."/>
            <person name="van Oostende C."/>
            <person name="Geitmann A."/>
        </authorList>
    </citation>
    <scope>SUBCELLULAR LOCATION</scope>
    <scope>TISSUE SPECIFICITY</scope>
    <scope>DEVELOPMENTAL STAGE</scope>
</reference>
<sequence length="137" mass="15884">MANAASGMAVEDECKLKFLELKAKRNYRFIIFRIDGQQVVVEKLGSPQENYDDFTNYLPPNECRYAVYDFDFTTAENIQKSKIFFIAWSPDSSRVRMKMVYASSKDRFKRELDGIQVELQATDPSEMSLDIIKSRAL</sequence>
<accession>Q8LFH6</accession>
<accession>A6QRD0</accession>
<accession>Q9FHC4</accession>
<comment type="function">
    <text evidence="2">Actin-depolymerizing protein. Severs actin filaments (F-actin) and binds to actin monomers.</text>
</comment>
<comment type="subcellular location">
    <subcellularLocation>
        <location evidence="4">Cytoplasm</location>
        <location evidence="4">Cytoskeleton</location>
    </subcellularLocation>
    <text evidence="4">In germinating pollen grains and elongating pollen tubes, associates with the subapical actin fringe.</text>
</comment>
<comment type="tissue specificity">
    <text evidence="4">Specifically expressed in pollen.</text>
</comment>
<comment type="developmental stage">
    <text evidence="4">During male gametophyte development, expressed at the polarized microspore stage, bicellular stage, mature pollen stage, anthesis stage and open flower stage. Expressed in germinating pollen grains and elongating pollen tubes.</text>
</comment>
<comment type="similarity">
    <text evidence="7">Belongs to the actin-binding proteins ADF family.</text>
</comment>
<comment type="sequence caution" evidence="7">
    <conflict type="erroneous gene model prediction">
        <sequence resource="EMBL-CDS" id="BAB10533"/>
    </conflict>
</comment>
<gene>
    <name evidence="5" type="primary">ADF12</name>
    <name evidence="6" type="synonym">ADF10</name>
    <name type="ordered locus">At5g52360</name>
    <name type="ORF">K24M7.10</name>
</gene>
<name>ADF12_ARATH</name>
<feature type="chain" id="PRO_0000278103" description="Actin-depolymerizing factor 12">
    <location>
        <begin position="1"/>
        <end position="137"/>
    </location>
</feature>
<feature type="domain" description="ADF-H" evidence="3">
    <location>
        <begin position="7"/>
        <end position="137"/>
    </location>
</feature>
<feature type="modified residue" description="Phosphoserine" evidence="1">
    <location>
        <position position="6"/>
    </location>
</feature>
<feature type="sequence conflict" description="In Ref. 4; AAM61402." evidence="7" ref="4">
    <original>A</original>
    <variation>T</variation>
    <location>
        <position position="136"/>
    </location>
</feature>
<proteinExistence type="evidence at transcript level"/>
<evidence type="ECO:0000250" key="1">
    <source>
        <dbReference type="UniProtKB" id="Q39250"/>
    </source>
</evidence>
<evidence type="ECO:0000250" key="2">
    <source>
        <dbReference type="UniProtKB" id="Q39251"/>
    </source>
</evidence>
<evidence type="ECO:0000255" key="3">
    <source>
        <dbReference type="PROSITE-ProRule" id="PRU00599"/>
    </source>
</evidence>
<evidence type="ECO:0000269" key="4">
    <source>
    </source>
</evidence>
<evidence type="ECO:0000303" key="5">
    <source>
    </source>
</evidence>
<evidence type="ECO:0000303" key="6">
    <source>
    </source>
</evidence>
<evidence type="ECO:0000305" key="7"/>
<protein>
    <recommendedName>
        <fullName>Actin-depolymerizing factor 12</fullName>
        <shortName>ADF-12</shortName>
        <shortName>AtADF12</shortName>
    </recommendedName>
</protein>
<organism>
    <name type="scientific">Arabidopsis thaliana</name>
    <name type="common">Mouse-ear cress</name>
    <dbReference type="NCBI Taxonomy" id="3702"/>
    <lineage>
        <taxon>Eukaryota</taxon>
        <taxon>Viridiplantae</taxon>
        <taxon>Streptophyta</taxon>
        <taxon>Embryophyta</taxon>
        <taxon>Tracheophyta</taxon>
        <taxon>Spermatophyta</taxon>
        <taxon>Magnoliopsida</taxon>
        <taxon>eudicotyledons</taxon>
        <taxon>Gunneridae</taxon>
        <taxon>Pentapetalae</taxon>
        <taxon>rosids</taxon>
        <taxon>malvids</taxon>
        <taxon>Brassicales</taxon>
        <taxon>Brassicaceae</taxon>
        <taxon>Camelineae</taxon>
        <taxon>Arabidopsis</taxon>
    </lineage>
</organism>